<dbReference type="EC" id="3.4.23.-"/>
<dbReference type="EMBL" id="X71133">
    <property type="protein sequence ID" value="CAA50457.1"/>
    <property type="molecule type" value="Genomic_DNA"/>
</dbReference>
<dbReference type="EMBL" id="Z28100">
    <property type="protein sequence ID" value="CAA81940.1"/>
    <property type="molecule type" value="Genomic_DNA"/>
</dbReference>
<dbReference type="EMBL" id="BK006944">
    <property type="protein sequence ID" value="DAA09057.1"/>
    <property type="molecule type" value="Genomic_DNA"/>
</dbReference>
<dbReference type="PIR" id="S37927">
    <property type="entry name" value="S37927"/>
</dbReference>
<dbReference type="BioGRID" id="34033">
    <property type="interactions" value="72"/>
</dbReference>
<dbReference type="FunCoup" id="P34248">
    <property type="interactions" value="19"/>
</dbReference>
<dbReference type="IntAct" id="P34248">
    <property type="interactions" value="44"/>
</dbReference>
<dbReference type="MINT" id="P34248"/>
<dbReference type="STRING" id="4932.YKL100C"/>
<dbReference type="MEROPS" id="A22.008"/>
<dbReference type="GlyGen" id="P34248">
    <property type="glycosylation" value="1 site"/>
</dbReference>
<dbReference type="iPTMnet" id="P34248"/>
<dbReference type="PaxDb" id="4932-YKL100C"/>
<dbReference type="PeptideAtlas" id="P34248"/>
<dbReference type="EnsemblFungi" id="YKL100C_mRNA">
    <property type="protein sequence ID" value="YKL100C"/>
    <property type="gene ID" value="YKL100C"/>
</dbReference>
<dbReference type="KEGG" id="sce:YKL100C"/>
<dbReference type="AGR" id="SGD:S000001583"/>
<dbReference type="SGD" id="S000001583">
    <property type="gene designation" value="YKL100C"/>
</dbReference>
<dbReference type="VEuPathDB" id="FungiDB:YKL100C"/>
<dbReference type="eggNOG" id="KOG2443">
    <property type="taxonomic scope" value="Eukaryota"/>
</dbReference>
<dbReference type="GeneTree" id="ENSGT00940000156478"/>
<dbReference type="HOGENOM" id="CLU_023799_3_0_1"/>
<dbReference type="InParanoid" id="P34248"/>
<dbReference type="OMA" id="FIAMCYK"/>
<dbReference type="OrthoDB" id="29661at2759"/>
<dbReference type="BioCyc" id="YEAST:G3O-31890-MONOMER"/>
<dbReference type="BioGRID-ORCS" id="853761">
    <property type="hits" value="3 hits in 10 CRISPR screens"/>
</dbReference>
<dbReference type="PRO" id="PR:P34248"/>
<dbReference type="Proteomes" id="UP000002311">
    <property type="component" value="Chromosome XI"/>
</dbReference>
<dbReference type="RNAct" id="P34248">
    <property type="molecule type" value="protein"/>
</dbReference>
<dbReference type="GO" id="GO:0098554">
    <property type="term" value="C:cytoplasmic side of endoplasmic reticulum membrane"/>
    <property type="evidence" value="ECO:0000318"/>
    <property type="project" value="GO_Central"/>
</dbReference>
<dbReference type="GO" id="GO:0098553">
    <property type="term" value="C:lumenal side of endoplasmic reticulum membrane"/>
    <property type="evidence" value="ECO:0000318"/>
    <property type="project" value="GO_Central"/>
</dbReference>
<dbReference type="GO" id="GO:1990578">
    <property type="term" value="C:perinuclear endoplasmic reticulum membrane"/>
    <property type="evidence" value="ECO:0000314"/>
    <property type="project" value="SGD"/>
</dbReference>
<dbReference type="GO" id="GO:0042500">
    <property type="term" value="F:aspartic endopeptidase activity, intramembrane cleaving"/>
    <property type="evidence" value="ECO:0000315"/>
    <property type="project" value="SGD"/>
</dbReference>
<dbReference type="GO" id="GO:0009267">
    <property type="term" value="P:cellular response to starvation"/>
    <property type="evidence" value="ECO:0000315"/>
    <property type="project" value="SGD"/>
</dbReference>
<dbReference type="GO" id="GO:0033619">
    <property type="term" value="P:membrane protein proteolysis"/>
    <property type="evidence" value="ECO:0000318"/>
    <property type="project" value="GO_Central"/>
</dbReference>
<dbReference type="GO" id="GO:0051603">
    <property type="term" value="P:proteolysis involved in protein catabolic process"/>
    <property type="evidence" value="ECO:0000315"/>
    <property type="project" value="SGD"/>
</dbReference>
<dbReference type="GO" id="GO:0006465">
    <property type="term" value="P:signal peptide processing"/>
    <property type="evidence" value="ECO:0000318"/>
    <property type="project" value="GO_Central"/>
</dbReference>
<dbReference type="InterPro" id="IPR007369">
    <property type="entry name" value="Peptidase_A22B_SPP"/>
</dbReference>
<dbReference type="InterPro" id="IPR006639">
    <property type="entry name" value="Preselin/SPP"/>
</dbReference>
<dbReference type="PANTHER" id="PTHR12174:SF23">
    <property type="entry name" value="MINOR HISTOCOMPATIBILITY ANTIGEN H13"/>
    <property type="match status" value="1"/>
</dbReference>
<dbReference type="PANTHER" id="PTHR12174">
    <property type="entry name" value="SIGNAL PEPTIDE PEPTIDASE"/>
    <property type="match status" value="1"/>
</dbReference>
<dbReference type="Pfam" id="PF04258">
    <property type="entry name" value="Peptidase_A22B"/>
    <property type="match status" value="1"/>
</dbReference>
<dbReference type="SMART" id="SM00730">
    <property type="entry name" value="PSN"/>
    <property type="match status" value="1"/>
</dbReference>
<name>YKK0_YEAST</name>
<accession>P34248</accession>
<accession>D6VXI7</accession>
<gene>
    <name type="ordered locus">YKL100C</name>
    <name type="ORF">YKL450</name>
</gene>
<keyword id="KW-0256">Endoplasmic reticulum</keyword>
<keyword id="KW-0378">Hydrolase</keyword>
<keyword id="KW-0472">Membrane</keyword>
<keyword id="KW-0645">Protease</keyword>
<keyword id="KW-1185">Reference proteome</keyword>
<keyword id="KW-0812">Transmembrane</keyword>
<keyword id="KW-1133">Transmembrane helix</keyword>
<organism>
    <name type="scientific">Saccharomyces cerevisiae (strain ATCC 204508 / S288c)</name>
    <name type="common">Baker's yeast</name>
    <dbReference type="NCBI Taxonomy" id="559292"/>
    <lineage>
        <taxon>Eukaryota</taxon>
        <taxon>Fungi</taxon>
        <taxon>Dikarya</taxon>
        <taxon>Ascomycota</taxon>
        <taxon>Saccharomycotina</taxon>
        <taxon>Saccharomycetes</taxon>
        <taxon>Saccharomycetales</taxon>
        <taxon>Saccharomycetaceae</taxon>
        <taxon>Saccharomyces</taxon>
    </lineage>
</organism>
<evidence type="ECO:0000250" key="1"/>
<evidence type="ECO:0000255" key="2"/>
<evidence type="ECO:0000256" key="3">
    <source>
        <dbReference type="SAM" id="MobiDB-lite"/>
    </source>
</evidence>
<evidence type="ECO:0000305" key="4"/>
<sequence>MDKYLNSFVDHLSEWSSRAFRNNSSSANQSASNKELEQVFEQINAIVENHNNKLTTAFDKISYRVAHKITHLVESHSLVFNYATLVLIASALVVIGSFTSISSIPFTALPPTREHSLFDPTDFDVDHDCHVIYRENDEDKKKKKKSKRFFDMMDEKHAIILPLTSGCTLLALYFVIKKLHLNWLKYVVKILNFNITLLNIPAGTFVYSYFLNSLFRNLSHLASWNPLVVLPRYRVTIADDNEDLNKIGGFVTNLNYKDGLTNSVVHKKTLDEIEKDHWMKHFYRRELVEPKDIKSKRQISNMYLNSALIVSFVLSIVSTVYFYLSPNDWLISNAVSMNMAIWSIAQLKLKNLKSGALILIALFFYDICFVFGTDVMVTVATNLDIPVKLSLPVKFNTAQNNFNFSILGLGDIALPGMFIAMCYKYDIWKWHLDHDDTEFHFLNWSYVGKYFITAMVSYVASLVSAMVSLSIFNTAQPALLYIVPSLLISTILVACWNKDFKQFWNFQYDTIEVDKSLKKAIEKKENSITYSTFILSEYYNDADKYALLGDDVNENFDDDEEFVQEEDLSDSSEEELSEEDLLDDESS</sequence>
<comment type="function">
    <text evidence="1">May act as intramembrane protease.</text>
</comment>
<comment type="subcellular location">
    <subcellularLocation>
        <location evidence="1">Membrane</location>
        <topology evidence="1">Multi-pass membrane protein</topology>
    </subcellularLocation>
    <subcellularLocation>
        <location evidence="1">Endoplasmic reticulum membrane</location>
        <topology evidence="1">Multi-pass membrane protein</topology>
    </subcellularLocation>
</comment>
<comment type="domain">
    <text evidence="1">The PAL motif is required for normal active site conformation.</text>
</comment>
<comment type="similarity">
    <text evidence="4">Belongs to the peptidase A22B family.</text>
</comment>
<protein>
    <recommendedName>
        <fullName>Probable intramembrane protease YKL100C</fullName>
        <ecNumber>3.4.23.-</ecNumber>
    </recommendedName>
</protein>
<reference key="1">
    <citation type="journal article" date="1993" name="Yeast">
        <title>DNA sequence analysis of a 17 kb fragment of yeast chromosome XI physically localizes the MRB1 gene and reveals eight new open reading frames, including a homologue of the KIN1/KIN2 and SNF1 protein kinases.</title>
        <authorList>
            <person name="Pallier C."/>
            <person name="Valens M."/>
            <person name="Puzos V."/>
            <person name="Fukuhara H."/>
            <person name="Cheret G."/>
            <person name="Sor F."/>
            <person name="Bolotin-Fukuhara M."/>
        </authorList>
    </citation>
    <scope>NUCLEOTIDE SEQUENCE [GENOMIC DNA]</scope>
    <source>
        <strain>ATCC 204508 / S288c</strain>
    </source>
</reference>
<reference key="2">
    <citation type="journal article" date="1994" name="Nature">
        <title>Complete DNA sequence of yeast chromosome XI.</title>
        <authorList>
            <person name="Dujon B."/>
            <person name="Alexandraki D."/>
            <person name="Andre B."/>
            <person name="Ansorge W."/>
            <person name="Baladron V."/>
            <person name="Ballesta J.P.G."/>
            <person name="Banrevi A."/>
            <person name="Bolle P.-A."/>
            <person name="Bolotin-Fukuhara M."/>
            <person name="Bossier P."/>
            <person name="Bou G."/>
            <person name="Boyer J."/>
            <person name="Buitrago M.J."/>
            <person name="Cheret G."/>
            <person name="Colleaux L."/>
            <person name="Daignan-Fornier B."/>
            <person name="del Rey F."/>
            <person name="Dion C."/>
            <person name="Domdey H."/>
            <person name="Duesterhoeft A."/>
            <person name="Duesterhus S."/>
            <person name="Entian K.-D."/>
            <person name="Erfle H."/>
            <person name="Esteban P.F."/>
            <person name="Feldmann H."/>
            <person name="Fernandes L."/>
            <person name="Fobo G.M."/>
            <person name="Fritz C."/>
            <person name="Fukuhara H."/>
            <person name="Gabel C."/>
            <person name="Gaillon L."/>
            <person name="Garcia-Cantalejo J.M."/>
            <person name="Garcia-Ramirez J.J."/>
            <person name="Gent M.E."/>
            <person name="Ghazvini M."/>
            <person name="Goffeau A."/>
            <person name="Gonzalez A."/>
            <person name="Grothues D."/>
            <person name="Guerreiro P."/>
            <person name="Hegemann J.H."/>
            <person name="Hewitt N."/>
            <person name="Hilger F."/>
            <person name="Hollenberg C.P."/>
            <person name="Horaitis O."/>
            <person name="Indge K.J."/>
            <person name="Jacquier A."/>
            <person name="James C.M."/>
            <person name="Jauniaux J.-C."/>
            <person name="Jimenez A."/>
            <person name="Keuchel H."/>
            <person name="Kirchrath L."/>
            <person name="Kleine K."/>
            <person name="Koetter P."/>
            <person name="Legrain P."/>
            <person name="Liebl S."/>
            <person name="Louis E.J."/>
            <person name="Maia e Silva A."/>
            <person name="Marck C."/>
            <person name="Monnier A.-L."/>
            <person name="Moestl D."/>
            <person name="Mueller S."/>
            <person name="Obermaier B."/>
            <person name="Oliver S.G."/>
            <person name="Pallier C."/>
            <person name="Pascolo S."/>
            <person name="Pfeiffer F."/>
            <person name="Philippsen P."/>
            <person name="Planta R.J."/>
            <person name="Pohl F.M."/>
            <person name="Pohl T.M."/>
            <person name="Poehlmann R."/>
            <person name="Portetelle D."/>
            <person name="Purnelle B."/>
            <person name="Puzos V."/>
            <person name="Ramezani Rad M."/>
            <person name="Rasmussen S.W."/>
            <person name="Remacha M.A."/>
            <person name="Revuelta J.L."/>
            <person name="Richard G.-F."/>
            <person name="Rieger M."/>
            <person name="Rodrigues-Pousada C."/>
            <person name="Rose M."/>
            <person name="Rupp T."/>
            <person name="Santos M.A."/>
            <person name="Schwager C."/>
            <person name="Sensen C."/>
            <person name="Skala J."/>
            <person name="Soares H."/>
            <person name="Sor F."/>
            <person name="Stegemann J."/>
            <person name="Tettelin H."/>
            <person name="Thierry A."/>
            <person name="Tzermia M."/>
            <person name="Urrestarazu L.A."/>
            <person name="van Dyck L."/>
            <person name="van Vliet-Reedijk J.C."/>
            <person name="Valens M."/>
            <person name="Vandenbol M."/>
            <person name="Vilela C."/>
            <person name="Vissers S."/>
            <person name="von Wettstein D."/>
            <person name="Voss H."/>
            <person name="Wiemann S."/>
            <person name="Xu G."/>
            <person name="Zimmermann J."/>
            <person name="Haasemann M."/>
            <person name="Becker I."/>
            <person name="Mewes H.-W."/>
        </authorList>
    </citation>
    <scope>NUCLEOTIDE SEQUENCE [LARGE SCALE GENOMIC DNA]</scope>
    <source>
        <strain>ATCC 204508 / S288c</strain>
    </source>
</reference>
<reference key="3">
    <citation type="journal article" date="2014" name="G3 (Bethesda)">
        <title>The reference genome sequence of Saccharomyces cerevisiae: Then and now.</title>
        <authorList>
            <person name="Engel S.R."/>
            <person name="Dietrich F.S."/>
            <person name="Fisk D.G."/>
            <person name="Binkley G."/>
            <person name="Balakrishnan R."/>
            <person name="Costanzo M.C."/>
            <person name="Dwight S.S."/>
            <person name="Hitz B.C."/>
            <person name="Karra K."/>
            <person name="Nash R.S."/>
            <person name="Weng S."/>
            <person name="Wong E.D."/>
            <person name="Lloyd P."/>
            <person name="Skrzypek M.S."/>
            <person name="Miyasato S.R."/>
            <person name="Simison M."/>
            <person name="Cherry J.M."/>
        </authorList>
    </citation>
    <scope>GENOME REANNOTATION</scope>
    <source>
        <strain>ATCC 204508 / S288c</strain>
    </source>
</reference>
<reference key="4">
    <citation type="journal article" date="2006" name="Proc. Natl. Acad. Sci. U.S.A.">
        <title>A global topology map of the Saccharomyces cerevisiae membrane proteome.</title>
        <authorList>
            <person name="Kim H."/>
            <person name="Melen K."/>
            <person name="Oesterberg M."/>
            <person name="von Heijne G."/>
        </authorList>
    </citation>
    <scope>TOPOLOGY [LARGE SCALE ANALYSIS]</scope>
    <source>
        <strain>ATCC 208353 / W303-1A</strain>
    </source>
</reference>
<feature type="chain" id="PRO_0000073915" description="Probable intramembrane protease YKL100C">
    <location>
        <begin position="1"/>
        <end position="587"/>
    </location>
</feature>
<feature type="topological domain" description="Lumenal" evidence="2">
    <location>
        <begin position="1"/>
        <end position="85"/>
    </location>
</feature>
<feature type="transmembrane region" description="Helical" evidence="2">
    <location>
        <begin position="86"/>
        <end position="106"/>
    </location>
</feature>
<feature type="topological domain" description="Cytoplasmic" evidence="2">
    <location>
        <begin position="107"/>
        <end position="156"/>
    </location>
</feature>
<feature type="transmembrane region" description="Helical" evidence="2">
    <location>
        <begin position="157"/>
        <end position="177"/>
    </location>
</feature>
<feature type="topological domain" description="Lumenal" evidence="2">
    <location>
        <begin position="178"/>
        <end position="192"/>
    </location>
</feature>
<feature type="transmembrane region" description="Helical" evidence="2">
    <location>
        <begin position="193"/>
        <end position="213"/>
    </location>
</feature>
<feature type="topological domain" description="Cytoplasmic" evidence="2">
    <location>
        <begin position="214"/>
        <end position="303"/>
    </location>
</feature>
<feature type="transmembrane region" description="Helical" evidence="2">
    <location>
        <begin position="304"/>
        <end position="324"/>
    </location>
</feature>
<feature type="topological domain" description="Lumenal" evidence="2">
    <location>
        <begin position="325"/>
        <end position="328"/>
    </location>
</feature>
<feature type="transmembrane region" description="Helical" evidence="2">
    <location>
        <begin position="329"/>
        <end position="349"/>
    </location>
</feature>
<feature type="topological domain" description="Cytoplasmic" evidence="2">
    <location>
        <begin position="350"/>
        <end position="351"/>
    </location>
</feature>
<feature type="transmembrane region" description="Helical" evidence="2">
    <location>
        <begin position="352"/>
        <end position="372"/>
    </location>
</feature>
<feature type="topological domain" description="Lumenal" evidence="2">
    <location>
        <begin position="373"/>
        <end position="401"/>
    </location>
</feature>
<feature type="transmembrane region" description="Helical" evidence="2">
    <location>
        <begin position="402"/>
        <end position="422"/>
    </location>
</feature>
<feature type="topological domain" description="Cytoplasmic" evidence="2">
    <location>
        <begin position="423"/>
        <end position="450"/>
    </location>
</feature>
<feature type="transmembrane region" description="Helical" evidence="2">
    <location>
        <begin position="451"/>
        <end position="471"/>
    </location>
</feature>
<feature type="topological domain" description="Lumenal" evidence="2">
    <location>
        <begin position="472"/>
        <end position="475"/>
    </location>
</feature>
<feature type="transmembrane region" description="Helical" evidence="2">
    <location>
        <begin position="476"/>
        <end position="496"/>
    </location>
</feature>
<feature type="topological domain" description="Cytoplasmic" evidence="2">
    <location>
        <begin position="497"/>
        <end position="587"/>
    </location>
</feature>
<feature type="region of interest" description="Disordered" evidence="3">
    <location>
        <begin position="561"/>
        <end position="587"/>
    </location>
</feature>
<feature type="short sequence motif" description="PAL">
    <location>
        <begin position="477"/>
        <end position="479"/>
    </location>
</feature>
<feature type="active site" evidence="1">
    <location>
        <position position="366"/>
    </location>
</feature>
<feature type="active site" evidence="1">
    <location>
        <position position="411"/>
    </location>
</feature>
<proteinExistence type="evidence at protein level"/>